<evidence type="ECO:0000250" key="1"/>
<evidence type="ECO:0000250" key="2">
    <source>
        <dbReference type="UniProtKB" id="Q8NC56"/>
    </source>
</evidence>
<evidence type="ECO:0000255" key="3"/>
<evidence type="ECO:0000255" key="4">
    <source>
        <dbReference type="PROSITE-ProRule" id="PRU00313"/>
    </source>
</evidence>
<evidence type="ECO:0000256" key="5">
    <source>
        <dbReference type="SAM" id="MobiDB-lite"/>
    </source>
</evidence>
<evidence type="ECO:0000269" key="6">
    <source>
    </source>
</evidence>
<evidence type="ECO:0000269" key="7">
    <source>
    </source>
</evidence>
<evidence type="ECO:0000269" key="8">
    <source>
    </source>
</evidence>
<evidence type="ECO:0000269" key="9">
    <source>
    </source>
</evidence>
<evidence type="ECO:0000269" key="10">
    <source>
    </source>
</evidence>
<evidence type="ECO:0000305" key="11"/>
<evidence type="ECO:0007744" key="12">
    <source>
    </source>
</evidence>
<evidence type="ECO:0007744" key="13">
    <source>
    </source>
</evidence>
<protein>
    <recommendedName>
        <fullName>LEM domain-containing protein 2</fullName>
    </recommendedName>
    <alternativeName>
        <fullName>Nuclear envelope transmembrane protein 25</fullName>
        <shortName>NET25</shortName>
    </alternativeName>
</protein>
<dbReference type="EMBL" id="AY640307">
    <property type="protein sequence ID" value="AAT71319.1"/>
    <property type="molecule type" value="mRNA"/>
</dbReference>
<dbReference type="EMBL" id="AK082131">
    <property type="protein sequence ID" value="BAC38419.1"/>
    <property type="status" value="ALT_SEQ"/>
    <property type="molecule type" value="mRNA"/>
</dbReference>
<dbReference type="EMBL" id="AK143224">
    <property type="protein sequence ID" value="BAE25316.1"/>
    <property type="molecule type" value="mRNA"/>
</dbReference>
<dbReference type="EMBL" id="BC026588">
    <property type="protein sequence ID" value="AAH26588.1"/>
    <property type="status" value="ALT_INIT"/>
    <property type="molecule type" value="mRNA"/>
</dbReference>
<dbReference type="CCDS" id="CCDS50043.1"/>
<dbReference type="RefSeq" id="NP_666187.2">
    <property type="nucleotide sequence ID" value="NM_146075.2"/>
</dbReference>
<dbReference type="SMR" id="Q6DVA0"/>
<dbReference type="BioGRID" id="230294">
    <property type="interactions" value="1"/>
</dbReference>
<dbReference type="FunCoup" id="Q6DVA0">
    <property type="interactions" value="1742"/>
</dbReference>
<dbReference type="IntAct" id="Q6DVA0">
    <property type="interactions" value="1"/>
</dbReference>
<dbReference type="MINT" id="Q6DVA0"/>
<dbReference type="STRING" id="10090.ENSMUSP00000058221"/>
<dbReference type="GlyGen" id="Q6DVA0">
    <property type="glycosylation" value="2 sites, 2 N-linked glycans (2 sites)"/>
</dbReference>
<dbReference type="iPTMnet" id="Q6DVA0"/>
<dbReference type="PhosphoSitePlus" id="Q6DVA0"/>
<dbReference type="SwissPalm" id="Q6DVA0"/>
<dbReference type="jPOST" id="Q6DVA0"/>
<dbReference type="PaxDb" id="10090-ENSMUSP00000058221"/>
<dbReference type="PeptideAtlas" id="Q6DVA0"/>
<dbReference type="ProteomicsDB" id="265059"/>
<dbReference type="Pumba" id="Q6DVA0"/>
<dbReference type="Antibodypedia" id="1891">
    <property type="antibodies" value="138 antibodies from 25 providers"/>
</dbReference>
<dbReference type="DNASU" id="224640"/>
<dbReference type="Ensembl" id="ENSMUST00000055117.9">
    <property type="protein sequence ID" value="ENSMUSP00000058221.8"/>
    <property type="gene ID" value="ENSMUSG00000044857.9"/>
</dbReference>
<dbReference type="GeneID" id="224640"/>
<dbReference type="KEGG" id="mmu:224640"/>
<dbReference type="UCSC" id="uc008bfm.2">
    <property type="organism name" value="mouse"/>
</dbReference>
<dbReference type="AGR" id="MGI:2385045"/>
<dbReference type="CTD" id="221496"/>
<dbReference type="MGI" id="MGI:2385045">
    <property type="gene designation" value="Lemd2"/>
</dbReference>
<dbReference type="VEuPathDB" id="HostDB:ENSMUSG00000044857"/>
<dbReference type="eggNOG" id="ENOG502QRKK">
    <property type="taxonomic scope" value="Eukaryota"/>
</dbReference>
<dbReference type="GeneTree" id="ENSGT00940000160955"/>
<dbReference type="HOGENOM" id="CLU_045257_0_0_1"/>
<dbReference type="InParanoid" id="Q6DVA0"/>
<dbReference type="OMA" id="STSWFCQ"/>
<dbReference type="OrthoDB" id="118234at2759"/>
<dbReference type="PhylomeDB" id="Q6DVA0"/>
<dbReference type="TreeFam" id="TF315385"/>
<dbReference type="BioGRID-ORCS" id="224640">
    <property type="hits" value="13 hits in 79 CRISPR screens"/>
</dbReference>
<dbReference type="ChiTaRS" id="Lemd2">
    <property type="organism name" value="mouse"/>
</dbReference>
<dbReference type="PRO" id="PR:Q6DVA0"/>
<dbReference type="Proteomes" id="UP000000589">
    <property type="component" value="Chromosome 17"/>
</dbReference>
<dbReference type="RNAct" id="Q6DVA0">
    <property type="molecule type" value="protein"/>
</dbReference>
<dbReference type="Bgee" id="ENSMUSG00000044857">
    <property type="expression patterns" value="Expressed in granulocyte and 227 other cell types or tissues"/>
</dbReference>
<dbReference type="ExpressionAtlas" id="Q6DVA0">
    <property type="expression patterns" value="baseline and differential"/>
</dbReference>
<dbReference type="GO" id="GO:0000785">
    <property type="term" value="C:chromatin"/>
    <property type="evidence" value="ECO:0007669"/>
    <property type="project" value="Ensembl"/>
</dbReference>
<dbReference type="GO" id="GO:0005783">
    <property type="term" value="C:endoplasmic reticulum"/>
    <property type="evidence" value="ECO:0007669"/>
    <property type="project" value="Ensembl"/>
</dbReference>
<dbReference type="GO" id="GO:0005637">
    <property type="term" value="C:nuclear inner membrane"/>
    <property type="evidence" value="ECO:0000266"/>
    <property type="project" value="MGI"/>
</dbReference>
<dbReference type="GO" id="GO:0031965">
    <property type="term" value="C:nuclear membrane"/>
    <property type="evidence" value="ECO:0000314"/>
    <property type="project" value="MGI"/>
</dbReference>
<dbReference type="GO" id="GO:0005819">
    <property type="term" value="C:spindle"/>
    <property type="evidence" value="ECO:0007669"/>
    <property type="project" value="UniProtKB-SubCell"/>
</dbReference>
<dbReference type="GO" id="GO:0060914">
    <property type="term" value="P:heart formation"/>
    <property type="evidence" value="ECO:0000315"/>
    <property type="project" value="UniProtKB"/>
</dbReference>
<dbReference type="GO" id="GO:0043409">
    <property type="term" value="P:negative regulation of MAPK cascade"/>
    <property type="evidence" value="ECO:0000315"/>
    <property type="project" value="MGI"/>
</dbReference>
<dbReference type="GO" id="GO:0051898">
    <property type="term" value="P:negative regulation of phosphatidylinositol 3-kinase/protein kinase B signal transduction"/>
    <property type="evidence" value="ECO:0000315"/>
    <property type="project" value="UniProtKB"/>
</dbReference>
<dbReference type="GO" id="GO:0022008">
    <property type="term" value="P:neurogenesis"/>
    <property type="evidence" value="ECO:0000315"/>
    <property type="project" value="UniProtKB"/>
</dbReference>
<dbReference type="GO" id="GO:0006998">
    <property type="term" value="P:nuclear envelope organization"/>
    <property type="evidence" value="ECO:0007669"/>
    <property type="project" value="Ensembl"/>
</dbReference>
<dbReference type="GO" id="GO:0071168">
    <property type="term" value="P:protein localization to chromatin"/>
    <property type="evidence" value="ECO:0007669"/>
    <property type="project" value="Ensembl"/>
</dbReference>
<dbReference type="GO" id="GO:0035914">
    <property type="term" value="P:skeletal muscle cell differentiation"/>
    <property type="evidence" value="ECO:0000315"/>
    <property type="project" value="MGI"/>
</dbReference>
<dbReference type="FunFam" id="1.10.720.40:FF:000001">
    <property type="entry name" value="LEM domain containing 2, isoform CRA_a"/>
    <property type="match status" value="1"/>
</dbReference>
<dbReference type="FunFam" id="1.10.10.1180:FF:000002">
    <property type="entry name" value="LEM domain-containing protein 2"/>
    <property type="match status" value="1"/>
</dbReference>
<dbReference type="Gene3D" id="1.10.720.40">
    <property type="match status" value="1"/>
</dbReference>
<dbReference type="Gene3D" id="1.10.10.1180">
    <property type="entry name" value="MAN1, winged-helix domain"/>
    <property type="match status" value="1"/>
</dbReference>
<dbReference type="InterPro" id="IPR052277">
    <property type="entry name" value="INM_ESCRT-Associated"/>
</dbReference>
<dbReference type="InterPro" id="IPR011015">
    <property type="entry name" value="LEM/LEM-like_dom_sf"/>
</dbReference>
<dbReference type="InterPro" id="IPR003887">
    <property type="entry name" value="LEM_dom"/>
</dbReference>
<dbReference type="InterPro" id="IPR018996">
    <property type="entry name" value="Man1/Src1-like_C"/>
</dbReference>
<dbReference type="InterPro" id="IPR041885">
    <property type="entry name" value="MAN1_winged_helix_dom"/>
</dbReference>
<dbReference type="PANTHER" id="PTHR13428">
    <property type="entry name" value="INNER NUCLEAR MEMBRANE PROTEIN MAN1 LEM DOMAIN CONTAINING PROTEIN"/>
    <property type="match status" value="1"/>
</dbReference>
<dbReference type="PANTHER" id="PTHR13428:SF8">
    <property type="entry name" value="LEM DOMAIN-CONTAINING PROTEIN 2"/>
    <property type="match status" value="1"/>
</dbReference>
<dbReference type="Pfam" id="PF03020">
    <property type="entry name" value="LEM"/>
    <property type="match status" value="1"/>
</dbReference>
<dbReference type="Pfam" id="PF09402">
    <property type="entry name" value="MSC"/>
    <property type="match status" value="1"/>
</dbReference>
<dbReference type="SMART" id="SM00540">
    <property type="entry name" value="LEM"/>
    <property type="match status" value="1"/>
</dbReference>
<dbReference type="SUPFAM" id="SSF63451">
    <property type="entry name" value="LEM domain"/>
    <property type="match status" value="1"/>
</dbReference>
<dbReference type="PROSITE" id="PS50954">
    <property type="entry name" value="LEM"/>
    <property type="match status" value="1"/>
</dbReference>
<keyword id="KW-0007">Acetylation</keyword>
<keyword id="KW-0963">Cytoplasm</keyword>
<keyword id="KW-0206">Cytoskeleton</keyword>
<keyword id="KW-0472">Membrane</keyword>
<keyword id="KW-0539">Nucleus</keyword>
<keyword id="KW-0597">Phosphoprotein</keyword>
<keyword id="KW-1185">Reference proteome</keyword>
<keyword id="KW-0812">Transmembrane</keyword>
<keyword id="KW-1133">Transmembrane helix</keyword>
<proteinExistence type="evidence at protein level"/>
<accession>Q6DVA0</accession>
<accession>Q8C4H8</accession>
<accession>Q8R0N2</accession>
<comment type="function">
    <text evidence="2 6 7 8 9 10">Nuclear lamina-associated inner nuclear membrane protein that is involved in nuclear structure organization and maintenance of nuclear envelope (NE) integrity and NE reformation after mitosis (PubMed:16339967). Plays a role as transmembrane adapter for the endosomal sorting complexes required for transport (ESCRT), and is thereby involved in ESCRT-mediated NE reformation (By similarity). Promotes ESCRT-mediated NE closure by recruiting CHMP7 and downstream ESCRT-III proteins IST1/CHMP8 and CHMP2A to the reforming NE during anaphase (By similarity). During nuclear reassembly, condenses into a liquid-like coating around microtubule spindles and coassembles with CHMP7 to form a macromolecular O-ring seal at the confluence between membranes, chromatin, and the spindle to facilitate early nuclear sealing (By similarity). Plays a role in the organization of heterochromatin associated with the NE and in the maintenance of NE organization under mechanical stress (PubMed:36377660). Required for embryonic development and is involved in regulation of several signaling pathways such as MAPK and AKT (PubMed:25790465). Required for myoblast differentiation involving regulation of ERK signaling (PubMed:17062158, PubMed:19720741). Essential for cardiac homeostasis and proper heart function (PubMed:36377660).</text>
</comment>
<comment type="subunit">
    <text evidence="2 6">Interacts (via N-terminus) with LMNA isoform C (via C-terminus) (in vitro) (PubMed:16339967). Interacts (via LEM domain) with BANF1 (By similarity). Interacts (via C-terminus) with CHMP7 (By similarity). Interacts (via N-terminus) with tubulin; the interaction causes microtubule bundling and stabilization (in vitro) (By similarity).</text>
</comment>
<comment type="subcellular location">
    <subcellularLocation>
        <location evidence="6 7">Nucleus inner membrane</location>
        <topology evidence="6">Multi-pass membrane protein</topology>
    </subcellularLocation>
    <subcellularLocation>
        <location evidence="10">Nucleus envelope</location>
    </subcellularLocation>
    <subcellularLocation>
        <location evidence="2">Cytoplasm</location>
        <location evidence="2">Cytoskeleton</location>
        <location evidence="2">Spindle</location>
    </subcellularLocation>
    <text evidence="2 6">Lamina-associated protein residing in the inner nuclear membrane (INM) of the nuclear envelope (NE) (PubMed:16339967). The localization to the INM is dependent on LMNA (By similarity). Evenly distributed around the NE during interphase (PubMed:16339967). During metaphase, found in a reticular network (By similarity). Recruited to the reforming NE on chromatin disks in early anaphase (By similarity). In late anaphase, concentrates at the NE core proximal to spindle microtubules, and then broadening to a distributed nuclear rim pattern (By similarity).</text>
</comment>
<comment type="tissue specificity">
    <text evidence="6 10">Ubiquitously expressed, including liver, brain, heart, skeletal muscle, lung, testis, spleen, kidney and white adipose tissue.</text>
</comment>
<comment type="developmental stage">
    <text evidence="6">Expressed at detectable levels throughout later stages of mouse development such as 12 dpc, 14 dpc, 16 dpc and 18 dpc.</text>
</comment>
<comment type="domain">
    <text evidence="2">The LEM domain is required for inner nuclear membrane (INM) localization and contains a BANF1 conserved binding motif which allows localization to chromatin (By similarity). In late anaphase, as the reforming nuclear envelope (NE) surrounds the chromatin disk, both the LEM domain and the disordered regions are necessary for localization to the NE core (By similarity).</text>
</comment>
<comment type="domain">
    <text evidence="2">The disordered regions, also named low complexity domain, confer the ability to phase separate (By similarity). In late anaphase, as the reforming nuclear envelope (NE) surrounds the chromatin disks, both the LEM domain and the disordered regions are necessary for localization to the NE core (By similarity). During NE reformation, the proline-arginine-rich sequence within the disordered region binds microtubules, targeting LEM2 condensation to spindle microtubules traversing the nascent NE (By similarity).</text>
</comment>
<comment type="domain">
    <text evidence="2">The winged-helix (WH) region (residues 403-511) activates the ESCRT-II/ESCRT-III hybrid protein, CHMP7, to form co-oligomeric rings around spindle microtubules to facilitate early nuclear sealing.</text>
</comment>
<comment type="PTM">
    <text evidence="2">Phosphorylated; strongly phosphorylated in mitosis compared to G1/S.</text>
</comment>
<comment type="disruption phenotype">
    <text evidence="9 10">Embryonic lethal by 11.5 dpc (PubMed:25790465). At 10.5 dpc most tissues are substantially reduced in size, specifically neural and heart structures are developmentally less advanced and/or abnormal (PubMed:25790465). At 10.5 dpc hyperactive MAPK and AKT signaling has been observed (PubMed:25790465). Heart-specific knockout mice exhibit a reduction in body size and die shortly after birth due to heart abnormalities (PubMed:36377660). During transthoracic echocardiography, reduction in both ejection fraction (EF) and fractional shortening (FS) (PubMed:36377660). Systolic dysfunction with severely impaired contraction of the left ventricle (PubMed:36377660). Increase in nuclear envelope deformations, DNA damage, and cellular apoptosis in the heart under mechanical stress (PubMed:36377660).</text>
</comment>
<comment type="sequence caution" evidence="11">
    <conflict type="erroneous initiation">
        <sequence resource="EMBL-CDS" id="AAH26588"/>
    </conflict>
</comment>
<comment type="sequence caution" evidence="11">
    <conflict type="frameshift">
        <sequence resource="EMBL-CDS" id="BAC38419"/>
    </conflict>
</comment>
<sequence length="511" mass="57507">MAGLSDLELRRELQALGFQPGPITDTTRNVYRNKLRRLRGEARLRDDERLREDAGPREDAGPRGPERQREEARLREEAPLRARPAASVLRSEPWPLSPSPPAPSAASDASGPYGNFGASASPWAASRGLSYPPHAGPGPLRRRASVRGSSEDDEDTRTPDRHAPGRGRHWWAPPSASARPHSALLGADARPGLKGSRTGSAGAGRTRPEVGRWLERCLSRLLLWASLGLLLGFLAILWVKMGKPSAPQEAEDNMKLLPVDCERKTDEFCQAKQKAALLELLHELYNFLAIQAGNFECGNPEKLKSKCIPVLEAQEYIANVTSSPSSRFKAALTWILSSNKDVGIWLKGEDPSELATTVDKVVCLESARPRMGIGCRLSRALLTAVTHVLIFFWCLAFLWGLLILLKYRWRKLEEEEQAMYEMVKKIIDVVQDHYVDWEQDMERYPYVGILHVRDSLIPPQSRRRMKRVWDRAVEFLASNESRIQTESHRVAGEDMLVWRWTKPSSFSDSER</sequence>
<name>LEMD2_MOUSE</name>
<organism>
    <name type="scientific">Mus musculus</name>
    <name type="common">Mouse</name>
    <dbReference type="NCBI Taxonomy" id="10090"/>
    <lineage>
        <taxon>Eukaryota</taxon>
        <taxon>Metazoa</taxon>
        <taxon>Chordata</taxon>
        <taxon>Craniata</taxon>
        <taxon>Vertebrata</taxon>
        <taxon>Euteleostomi</taxon>
        <taxon>Mammalia</taxon>
        <taxon>Eutheria</taxon>
        <taxon>Euarchontoglires</taxon>
        <taxon>Glires</taxon>
        <taxon>Rodentia</taxon>
        <taxon>Myomorpha</taxon>
        <taxon>Muroidea</taxon>
        <taxon>Muridae</taxon>
        <taxon>Murinae</taxon>
        <taxon>Mus</taxon>
        <taxon>Mus</taxon>
    </lineage>
</organism>
<reference key="1">
    <citation type="journal article" date="2005" name="J. Cell Sci.">
        <title>LEM2 is a novel MAN1-related inner nuclear membrane protein associated with A-type lamins.</title>
        <authorList>
            <person name="Brachner A."/>
            <person name="Reipert S."/>
            <person name="Foisner R."/>
            <person name="Gotzmann J."/>
        </authorList>
    </citation>
    <scope>NUCLEOTIDE SEQUENCE [MRNA]</scope>
    <scope>SUBCELLULAR LOCATION</scope>
    <scope>FUNCTION</scope>
    <scope>TISSUE SPECIFICITY</scope>
    <scope>INTERACTION WITH LAMIN</scope>
    <scope>DEVELOPMENTAL STAGE</scope>
    <source>
        <strain>FVB/N</strain>
    </source>
</reference>
<reference key="2">
    <citation type="journal article" date="2005" name="Science">
        <title>The transcriptional landscape of the mammalian genome.</title>
        <authorList>
            <person name="Carninci P."/>
            <person name="Kasukawa T."/>
            <person name="Katayama S."/>
            <person name="Gough J."/>
            <person name="Frith M.C."/>
            <person name="Maeda N."/>
            <person name="Oyama R."/>
            <person name="Ravasi T."/>
            <person name="Lenhard B."/>
            <person name="Wells C."/>
            <person name="Kodzius R."/>
            <person name="Shimokawa K."/>
            <person name="Bajic V.B."/>
            <person name="Brenner S.E."/>
            <person name="Batalov S."/>
            <person name="Forrest A.R."/>
            <person name="Zavolan M."/>
            <person name="Davis M.J."/>
            <person name="Wilming L.G."/>
            <person name="Aidinis V."/>
            <person name="Allen J.E."/>
            <person name="Ambesi-Impiombato A."/>
            <person name="Apweiler R."/>
            <person name="Aturaliya R.N."/>
            <person name="Bailey T.L."/>
            <person name="Bansal M."/>
            <person name="Baxter L."/>
            <person name="Beisel K.W."/>
            <person name="Bersano T."/>
            <person name="Bono H."/>
            <person name="Chalk A.M."/>
            <person name="Chiu K.P."/>
            <person name="Choudhary V."/>
            <person name="Christoffels A."/>
            <person name="Clutterbuck D.R."/>
            <person name="Crowe M.L."/>
            <person name="Dalla E."/>
            <person name="Dalrymple B.P."/>
            <person name="de Bono B."/>
            <person name="Della Gatta G."/>
            <person name="di Bernardo D."/>
            <person name="Down T."/>
            <person name="Engstrom P."/>
            <person name="Fagiolini M."/>
            <person name="Faulkner G."/>
            <person name="Fletcher C.F."/>
            <person name="Fukushima T."/>
            <person name="Furuno M."/>
            <person name="Futaki S."/>
            <person name="Gariboldi M."/>
            <person name="Georgii-Hemming P."/>
            <person name="Gingeras T.R."/>
            <person name="Gojobori T."/>
            <person name="Green R.E."/>
            <person name="Gustincich S."/>
            <person name="Harbers M."/>
            <person name="Hayashi Y."/>
            <person name="Hensch T.K."/>
            <person name="Hirokawa N."/>
            <person name="Hill D."/>
            <person name="Huminiecki L."/>
            <person name="Iacono M."/>
            <person name="Ikeo K."/>
            <person name="Iwama A."/>
            <person name="Ishikawa T."/>
            <person name="Jakt M."/>
            <person name="Kanapin A."/>
            <person name="Katoh M."/>
            <person name="Kawasawa Y."/>
            <person name="Kelso J."/>
            <person name="Kitamura H."/>
            <person name="Kitano H."/>
            <person name="Kollias G."/>
            <person name="Krishnan S.P."/>
            <person name="Kruger A."/>
            <person name="Kummerfeld S.K."/>
            <person name="Kurochkin I.V."/>
            <person name="Lareau L.F."/>
            <person name="Lazarevic D."/>
            <person name="Lipovich L."/>
            <person name="Liu J."/>
            <person name="Liuni S."/>
            <person name="McWilliam S."/>
            <person name="Madan Babu M."/>
            <person name="Madera M."/>
            <person name="Marchionni L."/>
            <person name="Matsuda H."/>
            <person name="Matsuzawa S."/>
            <person name="Miki H."/>
            <person name="Mignone F."/>
            <person name="Miyake S."/>
            <person name="Morris K."/>
            <person name="Mottagui-Tabar S."/>
            <person name="Mulder N."/>
            <person name="Nakano N."/>
            <person name="Nakauchi H."/>
            <person name="Ng P."/>
            <person name="Nilsson R."/>
            <person name="Nishiguchi S."/>
            <person name="Nishikawa S."/>
            <person name="Nori F."/>
            <person name="Ohara O."/>
            <person name="Okazaki Y."/>
            <person name="Orlando V."/>
            <person name="Pang K.C."/>
            <person name="Pavan W.J."/>
            <person name="Pavesi G."/>
            <person name="Pesole G."/>
            <person name="Petrovsky N."/>
            <person name="Piazza S."/>
            <person name="Reed J."/>
            <person name="Reid J.F."/>
            <person name="Ring B.Z."/>
            <person name="Ringwald M."/>
            <person name="Rost B."/>
            <person name="Ruan Y."/>
            <person name="Salzberg S.L."/>
            <person name="Sandelin A."/>
            <person name="Schneider C."/>
            <person name="Schoenbach C."/>
            <person name="Sekiguchi K."/>
            <person name="Semple C.A."/>
            <person name="Seno S."/>
            <person name="Sessa L."/>
            <person name="Sheng Y."/>
            <person name="Shibata Y."/>
            <person name="Shimada H."/>
            <person name="Shimada K."/>
            <person name="Silva D."/>
            <person name="Sinclair B."/>
            <person name="Sperling S."/>
            <person name="Stupka E."/>
            <person name="Sugiura K."/>
            <person name="Sultana R."/>
            <person name="Takenaka Y."/>
            <person name="Taki K."/>
            <person name="Tammoja K."/>
            <person name="Tan S.L."/>
            <person name="Tang S."/>
            <person name="Taylor M.S."/>
            <person name="Tegner J."/>
            <person name="Teichmann S.A."/>
            <person name="Ueda H.R."/>
            <person name="van Nimwegen E."/>
            <person name="Verardo R."/>
            <person name="Wei C.L."/>
            <person name="Yagi K."/>
            <person name="Yamanishi H."/>
            <person name="Zabarovsky E."/>
            <person name="Zhu S."/>
            <person name="Zimmer A."/>
            <person name="Hide W."/>
            <person name="Bult C."/>
            <person name="Grimmond S.M."/>
            <person name="Teasdale R.D."/>
            <person name="Liu E.T."/>
            <person name="Brusic V."/>
            <person name="Quackenbush J."/>
            <person name="Wahlestedt C."/>
            <person name="Mattick J.S."/>
            <person name="Hume D.A."/>
            <person name="Kai C."/>
            <person name="Sasaki D."/>
            <person name="Tomaru Y."/>
            <person name="Fukuda S."/>
            <person name="Kanamori-Katayama M."/>
            <person name="Suzuki M."/>
            <person name="Aoki J."/>
            <person name="Arakawa T."/>
            <person name="Iida J."/>
            <person name="Imamura K."/>
            <person name="Itoh M."/>
            <person name="Kato T."/>
            <person name="Kawaji H."/>
            <person name="Kawagashira N."/>
            <person name="Kawashima T."/>
            <person name="Kojima M."/>
            <person name="Kondo S."/>
            <person name="Konno H."/>
            <person name="Nakano K."/>
            <person name="Ninomiya N."/>
            <person name="Nishio T."/>
            <person name="Okada M."/>
            <person name="Plessy C."/>
            <person name="Shibata K."/>
            <person name="Shiraki T."/>
            <person name="Suzuki S."/>
            <person name="Tagami M."/>
            <person name="Waki K."/>
            <person name="Watahiki A."/>
            <person name="Okamura-Oho Y."/>
            <person name="Suzuki H."/>
            <person name="Kawai J."/>
            <person name="Hayashizaki Y."/>
        </authorList>
    </citation>
    <scope>NUCLEOTIDE SEQUENCE [LARGE SCALE MRNA]</scope>
    <source>
        <strain>C57BL/6J</strain>
        <tissue>Cerebellum</tissue>
        <tissue>Eye</tissue>
    </source>
</reference>
<reference key="3">
    <citation type="journal article" date="2004" name="Genome Res.">
        <title>The status, quality, and expansion of the NIH full-length cDNA project: the Mammalian Gene Collection (MGC).</title>
        <authorList>
            <consortium name="The MGC Project Team"/>
        </authorList>
    </citation>
    <scope>NUCLEOTIDE SEQUENCE [LARGE SCALE MRNA] OF 225-511</scope>
    <source>
        <strain>FVB/N</strain>
        <tissue>Kidney</tissue>
    </source>
</reference>
<reference key="4">
    <citation type="journal article" date="2006" name="BMC Cell Biol.">
        <title>Nuclear envelope transmembrane proteins (NETs) that are up-regulated during myogenesis.</title>
        <authorList>
            <person name="Chen I.-H."/>
            <person name="Huber M."/>
            <person name="Guan T."/>
            <person name="Bubeck A."/>
            <person name="Gerace L."/>
        </authorList>
    </citation>
    <scope>FUNCTION</scope>
    <scope>SUBCELLULAR LOCATION</scope>
</reference>
<reference key="5">
    <citation type="journal article" date="2006" name="Mol. Cell. Proteomics">
        <title>Comprehensive identification of phosphorylation sites in postsynaptic density preparations.</title>
        <authorList>
            <person name="Trinidad J.C."/>
            <person name="Specht C.G."/>
            <person name="Thalhammer A."/>
            <person name="Schoepfer R."/>
            <person name="Burlingame A.L."/>
        </authorList>
    </citation>
    <scope>IDENTIFICATION BY MASS SPECTROMETRY [LARGE SCALE ANALYSIS]</scope>
    <source>
        <tissue>Brain</tissue>
    </source>
</reference>
<reference key="6">
    <citation type="journal article" date="2007" name="Proc. Natl. Acad. Sci. U.S.A.">
        <title>Large-scale phosphorylation analysis of mouse liver.</title>
        <authorList>
            <person name="Villen J."/>
            <person name="Beausoleil S.A."/>
            <person name="Gerber S.A."/>
            <person name="Gygi S.P."/>
        </authorList>
    </citation>
    <scope>PHOSPHORYLATION [LARGE SCALE ANALYSIS] AT SER-507 AND SER-509</scope>
    <scope>IDENTIFICATION BY MASS SPECTROMETRY [LARGE SCALE ANALYSIS]</scope>
    <source>
        <tissue>Liver</tissue>
    </source>
</reference>
<reference key="7">
    <citation type="journal article" date="2009" name="Mol. Cell. Biol.">
        <title>Overlapping functions of nuclear envelope proteins NET25 (Lem2) and emerin in regulation of extracellular signal-regulated kinase signaling in myoblast differentiation.</title>
        <authorList>
            <person name="Huber M.D."/>
            <person name="Guan T."/>
            <person name="Gerace L."/>
        </authorList>
    </citation>
    <scope>FUNCTION</scope>
</reference>
<reference key="8">
    <citation type="journal article" date="2010" name="Cell">
        <title>A tissue-specific atlas of mouse protein phosphorylation and expression.</title>
        <authorList>
            <person name="Huttlin E.L."/>
            <person name="Jedrychowski M.P."/>
            <person name="Elias J.E."/>
            <person name="Goswami T."/>
            <person name="Rad R."/>
            <person name="Beausoleil S.A."/>
            <person name="Villen J."/>
            <person name="Haas W."/>
            <person name="Sowa M.E."/>
            <person name="Gygi S.P."/>
        </authorList>
    </citation>
    <scope>PHOSPHORYLATION [LARGE SCALE ANALYSIS] AT SER-507</scope>
    <scope>IDENTIFICATION BY MASS SPECTROMETRY [LARGE SCALE ANALYSIS]</scope>
    <source>
        <tissue>Brown adipose tissue</tissue>
        <tissue>Kidney</tissue>
        <tissue>Lung</tissue>
        <tissue>Testis</tissue>
    </source>
</reference>
<reference key="9">
    <citation type="journal article" date="2015" name="PLoS ONE">
        <title>Nuclear envelope protein Lem2 is required for mouse development and regulates MAP and AKT kinases.</title>
        <authorList>
            <person name="Tapia O."/>
            <person name="Fong L.G."/>
            <person name="Huber M.D."/>
            <person name="Young S.G."/>
            <person name="Gerace L."/>
        </authorList>
    </citation>
    <scope>FUNCTION</scope>
    <scope>DISRUPTION PHENOTYPE</scope>
</reference>
<reference key="10">
    <citation type="journal article" date="2022" name="J. Clin. Invest.">
        <title>Loss of function of the nuclear envelope protein LEMD2 causes DNA damage-dependent cardiomyopathy.</title>
        <authorList>
            <person name="Caravia X.M."/>
            <person name="Ramirez-Martinez A."/>
            <person name="Gan P."/>
            <person name="Wang F."/>
            <person name="McAnally J.R."/>
            <person name="Xu L."/>
            <person name="Bassel-Duby R."/>
            <person name="Liu N."/>
            <person name="Olson E.N."/>
        </authorList>
    </citation>
    <scope>FUNCTION</scope>
    <scope>SUBCELLULAR LOCATION</scope>
    <scope>TISSUE SPECIFICITY</scope>
    <scope>DISRUPTION PHENOTYPE</scope>
    <scope>MUTAGENESIS OF LEU-13</scope>
</reference>
<gene>
    <name type="primary">Lemd2</name>
    <name type="synonym">Lem2</name>
</gene>
<feature type="initiator methionine" description="Removed" evidence="2">
    <location>
        <position position="1"/>
    </location>
</feature>
<feature type="chain" id="PRO_0000285250" description="LEM domain-containing protein 2">
    <location>
        <begin position="2"/>
        <end position="511"/>
    </location>
</feature>
<feature type="transmembrane region" description="Helical" evidence="3">
    <location>
        <begin position="221"/>
        <end position="241"/>
    </location>
</feature>
<feature type="transmembrane region" description="Helical" evidence="3">
    <location>
        <begin position="385"/>
        <end position="405"/>
    </location>
</feature>
<feature type="domain" description="LEM" evidence="4">
    <location>
        <begin position="2"/>
        <end position="42"/>
    </location>
</feature>
<feature type="region of interest" description="Disordered" evidence="5">
    <location>
        <begin position="18"/>
        <end position="110"/>
    </location>
</feature>
<feature type="region of interest" description="Required for nuclear retention and interaction with LMNA isoform C" evidence="2">
    <location>
        <begin position="80"/>
        <end position="141"/>
    </location>
</feature>
<feature type="region of interest" description="Interaction with lamin A/C complexes" evidence="1">
    <location>
        <begin position="80"/>
        <end position="112"/>
    </location>
</feature>
<feature type="region of interest" description="Disordered" evidence="5">
    <location>
        <begin position="128"/>
        <end position="206"/>
    </location>
</feature>
<feature type="region of interest" description="Winged-Helix (WH)" evidence="2">
    <location>
        <begin position="403"/>
        <end position="511"/>
    </location>
</feature>
<feature type="compositionally biased region" description="Basic and acidic residues" evidence="5">
    <location>
        <begin position="38"/>
        <end position="80"/>
    </location>
</feature>
<feature type="compositionally biased region" description="Low complexity" evidence="5">
    <location>
        <begin position="81"/>
        <end position="94"/>
    </location>
</feature>
<feature type="compositionally biased region" description="Low complexity" evidence="5">
    <location>
        <begin position="172"/>
        <end position="183"/>
    </location>
</feature>
<feature type="modified residue" description="N-acetylalanine" evidence="2">
    <location>
        <position position="2"/>
    </location>
</feature>
<feature type="modified residue" description="Phosphoserine" evidence="2">
    <location>
        <position position="505"/>
    </location>
</feature>
<feature type="modified residue" description="Phosphoserine" evidence="12 13">
    <location>
        <position position="507"/>
    </location>
</feature>
<feature type="modified residue" description="Phosphoserine" evidence="12">
    <location>
        <position position="509"/>
    </location>
</feature>
<feature type="mutagenesis site" description="Reduced Lemd2 protein levels. Disorganization of heterochromatin associated with the nuclear envelope in cardiomyocytes. Increased DNA double-strand breaks in the heart. Dilation of the atrial and ventricular chambers, severe systolic dysfunction and cardiac fibrosis leading to premature death. No defects in skeletal muscle observed." evidence="10">
    <original>L</original>
    <variation>R</variation>
    <location>
        <position position="13"/>
    </location>
</feature>
<feature type="sequence conflict" description="In Ref. 2; BAC38419." evidence="11" ref="2">
    <original>T</original>
    <variation>A</variation>
    <location>
        <position position="357"/>
    </location>
</feature>